<organism>
    <name type="scientific">Escherichia coli O8 (strain IAI1)</name>
    <dbReference type="NCBI Taxonomy" id="585034"/>
    <lineage>
        <taxon>Bacteria</taxon>
        <taxon>Pseudomonadati</taxon>
        <taxon>Pseudomonadota</taxon>
        <taxon>Gammaproteobacteria</taxon>
        <taxon>Enterobacterales</taxon>
        <taxon>Enterobacteriaceae</taxon>
        <taxon>Escherichia</taxon>
    </lineage>
</organism>
<dbReference type="EMBL" id="CU928160">
    <property type="protein sequence ID" value="CAR01153.1"/>
    <property type="molecule type" value="Genomic_DNA"/>
</dbReference>
<dbReference type="RefSeq" id="WP_001177644.1">
    <property type="nucleotide sequence ID" value="NC_011741.1"/>
</dbReference>
<dbReference type="SMR" id="B7M8T8"/>
<dbReference type="GeneID" id="75202412"/>
<dbReference type="KEGG" id="ecr:ECIAI1_4411"/>
<dbReference type="HOGENOM" id="CLU_107144_2_1_6"/>
<dbReference type="GO" id="GO:0005829">
    <property type="term" value="C:cytosol"/>
    <property type="evidence" value="ECO:0007669"/>
    <property type="project" value="TreeGrafter"/>
</dbReference>
<dbReference type="GO" id="GO:0051537">
    <property type="term" value="F:2 iron, 2 sulfur cluster binding"/>
    <property type="evidence" value="ECO:0007669"/>
    <property type="project" value="UniProtKB-KW"/>
</dbReference>
<dbReference type="GO" id="GO:0003700">
    <property type="term" value="F:DNA-binding transcription factor activity"/>
    <property type="evidence" value="ECO:0007669"/>
    <property type="project" value="UniProtKB-UniRule"/>
</dbReference>
<dbReference type="GO" id="GO:0003690">
    <property type="term" value="F:double-stranded DNA binding"/>
    <property type="evidence" value="ECO:0007669"/>
    <property type="project" value="UniProtKB-UniRule"/>
</dbReference>
<dbReference type="GO" id="GO:0005506">
    <property type="term" value="F:iron ion binding"/>
    <property type="evidence" value="ECO:0007669"/>
    <property type="project" value="UniProtKB-UniRule"/>
</dbReference>
<dbReference type="GO" id="GO:0045892">
    <property type="term" value="P:negative regulation of DNA-templated transcription"/>
    <property type="evidence" value="ECO:0007669"/>
    <property type="project" value="InterPro"/>
</dbReference>
<dbReference type="FunFam" id="1.10.10.10:FF:000105">
    <property type="entry name" value="HTH-type transcriptional repressor NsrR"/>
    <property type="match status" value="1"/>
</dbReference>
<dbReference type="Gene3D" id="1.10.10.10">
    <property type="entry name" value="Winged helix-like DNA-binding domain superfamily/Winged helix DNA-binding domain"/>
    <property type="match status" value="1"/>
</dbReference>
<dbReference type="HAMAP" id="MF_01177">
    <property type="entry name" value="HTH_type_NsrR"/>
    <property type="match status" value="1"/>
</dbReference>
<dbReference type="InterPro" id="IPR030489">
    <property type="entry name" value="TR_Rrf2-type_CS"/>
</dbReference>
<dbReference type="InterPro" id="IPR000944">
    <property type="entry name" value="Tscrpt_reg_Rrf2"/>
</dbReference>
<dbReference type="InterPro" id="IPR023761">
    <property type="entry name" value="Tscrpt_rep_HTH_NsrR"/>
</dbReference>
<dbReference type="InterPro" id="IPR036388">
    <property type="entry name" value="WH-like_DNA-bd_sf"/>
</dbReference>
<dbReference type="InterPro" id="IPR036390">
    <property type="entry name" value="WH_DNA-bd_sf"/>
</dbReference>
<dbReference type="NCBIfam" id="NF008240">
    <property type="entry name" value="PRK11014.1"/>
    <property type="match status" value="1"/>
</dbReference>
<dbReference type="NCBIfam" id="TIGR00738">
    <property type="entry name" value="rrf2_super"/>
    <property type="match status" value="1"/>
</dbReference>
<dbReference type="PANTHER" id="PTHR33221:SF4">
    <property type="entry name" value="HTH-TYPE TRANSCRIPTIONAL REPRESSOR NSRR"/>
    <property type="match status" value="1"/>
</dbReference>
<dbReference type="PANTHER" id="PTHR33221">
    <property type="entry name" value="WINGED HELIX-TURN-HELIX TRANSCRIPTIONAL REGULATOR, RRF2 FAMILY"/>
    <property type="match status" value="1"/>
</dbReference>
<dbReference type="Pfam" id="PF02082">
    <property type="entry name" value="Rrf2"/>
    <property type="match status" value="1"/>
</dbReference>
<dbReference type="SUPFAM" id="SSF46785">
    <property type="entry name" value="Winged helix' DNA-binding domain"/>
    <property type="match status" value="1"/>
</dbReference>
<dbReference type="PROSITE" id="PS01332">
    <property type="entry name" value="HTH_RRF2_1"/>
    <property type="match status" value="1"/>
</dbReference>
<dbReference type="PROSITE" id="PS51197">
    <property type="entry name" value="HTH_RRF2_2"/>
    <property type="match status" value="1"/>
</dbReference>
<comment type="function">
    <text evidence="1">Nitric oxide-sensitive repressor of genes involved in protecting the cell against nitrosative stress. May require iron for activity.</text>
</comment>
<comment type="cofactor">
    <cofactor evidence="1">
        <name>[2Fe-2S] cluster</name>
        <dbReference type="ChEBI" id="CHEBI:190135"/>
    </cofactor>
    <text evidence="1">Binds 1 [2Fe-2S] cluster per subunit.</text>
</comment>
<proteinExistence type="inferred from homology"/>
<evidence type="ECO:0000255" key="1">
    <source>
        <dbReference type="HAMAP-Rule" id="MF_01177"/>
    </source>
</evidence>
<protein>
    <recommendedName>
        <fullName evidence="1">HTH-type transcriptional repressor NsrR</fullName>
    </recommendedName>
</protein>
<reference key="1">
    <citation type="journal article" date="2009" name="PLoS Genet.">
        <title>Organised genome dynamics in the Escherichia coli species results in highly diverse adaptive paths.</title>
        <authorList>
            <person name="Touchon M."/>
            <person name="Hoede C."/>
            <person name="Tenaillon O."/>
            <person name="Barbe V."/>
            <person name="Baeriswyl S."/>
            <person name="Bidet P."/>
            <person name="Bingen E."/>
            <person name="Bonacorsi S."/>
            <person name="Bouchier C."/>
            <person name="Bouvet O."/>
            <person name="Calteau A."/>
            <person name="Chiapello H."/>
            <person name="Clermont O."/>
            <person name="Cruveiller S."/>
            <person name="Danchin A."/>
            <person name="Diard M."/>
            <person name="Dossat C."/>
            <person name="Karoui M.E."/>
            <person name="Frapy E."/>
            <person name="Garry L."/>
            <person name="Ghigo J.M."/>
            <person name="Gilles A.M."/>
            <person name="Johnson J."/>
            <person name="Le Bouguenec C."/>
            <person name="Lescat M."/>
            <person name="Mangenot S."/>
            <person name="Martinez-Jehanne V."/>
            <person name="Matic I."/>
            <person name="Nassif X."/>
            <person name="Oztas S."/>
            <person name="Petit M.A."/>
            <person name="Pichon C."/>
            <person name="Rouy Z."/>
            <person name="Ruf C.S."/>
            <person name="Schneider D."/>
            <person name="Tourret J."/>
            <person name="Vacherie B."/>
            <person name="Vallenet D."/>
            <person name="Medigue C."/>
            <person name="Rocha E.P.C."/>
            <person name="Denamur E."/>
        </authorList>
    </citation>
    <scope>NUCLEOTIDE SEQUENCE [LARGE SCALE GENOMIC DNA]</scope>
    <source>
        <strain>IAI1</strain>
    </source>
</reference>
<name>NSRR_ECO8A</name>
<feature type="chain" id="PRO_1000138118" description="HTH-type transcriptional repressor NsrR">
    <location>
        <begin position="1"/>
        <end position="141"/>
    </location>
</feature>
<feature type="domain" description="HTH rrf2-type" evidence="1">
    <location>
        <begin position="2"/>
        <end position="129"/>
    </location>
</feature>
<feature type="DNA-binding region" description="H-T-H motif" evidence="1">
    <location>
        <begin position="28"/>
        <end position="51"/>
    </location>
</feature>
<feature type="binding site" evidence="1">
    <location>
        <position position="91"/>
    </location>
    <ligand>
        <name>[2Fe-2S] cluster</name>
        <dbReference type="ChEBI" id="CHEBI:190135"/>
    </ligand>
</feature>
<feature type="binding site" evidence="1">
    <location>
        <position position="96"/>
    </location>
    <ligand>
        <name>[2Fe-2S] cluster</name>
        <dbReference type="ChEBI" id="CHEBI:190135"/>
    </ligand>
</feature>
<feature type="binding site" evidence="1">
    <location>
        <position position="102"/>
    </location>
    <ligand>
        <name>[2Fe-2S] cluster</name>
        <dbReference type="ChEBI" id="CHEBI:190135"/>
    </ligand>
</feature>
<accession>B7M8T8</accession>
<keyword id="KW-0001">2Fe-2S</keyword>
<keyword id="KW-0238">DNA-binding</keyword>
<keyword id="KW-0408">Iron</keyword>
<keyword id="KW-0411">Iron-sulfur</keyword>
<keyword id="KW-0479">Metal-binding</keyword>
<keyword id="KW-0678">Repressor</keyword>
<keyword id="KW-0804">Transcription</keyword>
<keyword id="KW-0805">Transcription regulation</keyword>
<gene>
    <name evidence="1" type="primary">nsrR</name>
    <name type="ordered locus">ECIAI1_4411</name>
</gene>
<sequence length="141" mass="15583">MQLTSFTDYGLRALIYMASLPEGRMTSISEVTDVYGVSRNHMVKIINQLSRAGYVTAVRGKNGGIRLGKSASAIRIGDVVRELEPLSLVNCSSEFCHITPACRLKQALSKAVQSFLTELDNYTLADLVEENQPLYKLLLVE</sequence>